<organism>
    <name type="scientific">Geotalea uraniireducens (strain Rf4)</name>
    <name type="common">Geobacter uraniireducens</name>
    <dbReference type="NCBI Taxonomy" id="351605"/>
    <lineage>
        <taxon>Bacteria</taxon>
        <taxon>Pseudomonadati</taxon>
        <taxon>Thermodesulfobacteriota</taxon>
        <taxon>Desulfuromonadia</taxon>
        <taxon>Geobacterales</taxon>
        <taxon>Geobacteraceae</taxon>
        <taxon>Geotalea</taxon>
    </lineage>
</organism>
<reference key="1">
    <citation type="submission" date="2007-05" db="EMBL/GenBank/DDBJ databases">
        <title>Complete sequence of Geobacter uraniireducens Rf4.</title>
        <authorList>
            <consortium name="US DOE Joint Genome Institute"/>
            <person name="Copeland A."/>
            <person name="Lucas S."/>
            <person name="Lapidus A."/>
            <person name="Barry K."/>
            <person name="Detter J.C."/>
            <person name="Glavina del Rio T."/>
            <person name="Hammon N."/>
            <person name="Israni S."/>
            <person name="Dalin E."/>
            <person name="Tice H."/>
            <person name="Pitluck S."/>
            <person name="Chertkov O."/>
            <person name="Brettin T."/>
            <person name="Bruce D."/>
            <person name="Han C."/>
            <person name="Schmutz J."/>
            <person name="Larimer F."/>
            <person name="Land M."/>
            <person name="Hauser L."/>
            <person name="Kyrpides N."/>
            <person name="Mikhailova N."/>
            <person name="Shelobolina E."/>
            <person name="Aklujkar M."/>
            <person name="Lovley D."/>
            <person name="Richardson P."/>
        </authorList>
    </citation>
    <scope>NUCLEOTIDE SEQUENCE [LARGE SCALE GENOMIC DNA]</scope>
    <source>
        <strain>ATCC BAA-1134 / JCM 13001 / Rf4</strain>
    </source>
</reference>
<accession>A5GAV8</accession>
<dbReference type="EMBL" id="CP000698">
    <property type="protein sequence ID" value="ABQ25288.1"/>
    <property type="molecule type" value="Genomic_DNA"/>
</dbReference>
<dbReference type="RefSeq" id="WP_011938010.1">
    <property type="nucleotide sequence ID" value="NC_009483.1"/>
</dbReference>
<dbReference type="SMR" id="A5GAV8"/>
<dbReference type="STRING" id="351605.Gura_1082"/>
<dbReference type="KEGG" id="gur:Gura_1082"/>
<dbReference type="HOGENOM" id="CLU_098841_0_1_7"/>
<dbReference type="OrthoDB" id="9810939at2"/>
<dbReference type="Proteomes" id="UP000006695">
    <property type="component" value="Chromosome"/>
</dbReference>
<dbReference type="GO" id="GO:0022625">
    <property type="term" value="C:cytosolic large ribosomal subunit"/>
    <property type="evidence" value="ECO:0007669"/>
    <property type="project" value="TreeGrafter"/>
</dbReference>
<dbReference type="GO" id="GO:0008097">
    <property type="term" value="F:5S rRNA binding"/>
    <property type="evidence" value="ECO:0007669"/>
    <property type="project" value="TreeGrafter"/>
</dbReference>
<dbReference type="GO" id="GO:0003735">
    <property type="term" value="F:structural constituent of ribosome"/>
    <property type="evidence" value="ECO:0007669"/>
    <property type="project" value="InterPro"/>
</dbReference>
<dbReference type="GO" id="GO:0006412">
    <property type="term" value="P:translation"/>
    <property type="evidence" value="ECO:0007669"/>
    <property type="project" value="UniProtKB-UniRule"/>
</dbReference>
<dbReference type="CDD" id="cd00432">
    <property type="entry name" value="Ribosomal_L18_L5e"/>
    <property type="match status" value="1"/>
</dbReference>
<dbReference type="FunFam" id="3.30.420.100:FF:000001">
    <property type="entry name" value="50S ribosomal protein L18"/>
    <property type="match status" value="1"/>
</dbReference>
<dbReference type="Gene3D" id="3.30.420.100">
    <property type="match status" value="1"/>
</dbReference>
<dbReference type="HAMAP" id="MF_01337_B">
    <property type="entry name" value="Ribosomal_uL18_B"/>
    <property type="match status" value="1"/>
</dbReference>
<dbReference type="InterPro" id="IPR004389">
    <property type="entry name" value="Ribosomal_uL18_bac-type"/>
</dbReference>
<dbReference type="InterPro" id="IPR005484">
    <property type="entry name" value="Ribosomal_uL18_bac/euk"/>
</dbReference>
<dbReference type="NCBIfam" id="TIGR00060">
    <property type="entry name" value="L18_bact"/>
    <property type="match status" value="1"/>
</dbReference>
<dbReference type="PANTHER" id="PTHR12899">
    <property type="entry name" value="39S RIBOSOMAL PROTEIN L18, MITOCHONDRIAL"/>
    <property type="match status" value="1"/>
</dbReference>
<dbReference type="PANTHER" id="PTHR12899:SF3">
    <property type="entry name" value="LARGE RIBOSOMAL SUBUNIT PROTEIN UL18M"/>
    <property type="match status" value="1"/>
</dbReference>
<dbReference type="Pfam" id="PF00861">
    <property type="entry name" value="Ribosomal_L18p"/>
    <property type="match status" value="1"/>
</dbReference>
<dbReference type="SUPFAM" id="SSF53137">
    <property type="entry name" value="Translational machinery components"/>
    <property type="match status" value="1"/>
</dbReference>
<feature type="chain" id="PRO_1000086666" description="Large ribosomal subunit protein uL18">
    <location>
        <begin position="1"/>
        <end position="122"/>
    </location>
</feature>
<proteinExistence type="inferred from homology"/>
<sequence>MSSLAQKKTARLKRQIRVRKKIRGTAERPRLNVFKTAKHIYAQLIDDTCGATLAAASTLLDEVSTGLSYTGNIEAAQKVGAAIAQKALAKEINMVVFDRNGFLYHGRIKALAEAARENGLSF</sequence>
<protein>
    <recommendedName>
        <fullName evidence="1">Large ribosomal subunit protein uL18</fullName>
    </recommendedName>
    <alternativeName>
        <fullName evidence="2">50S ribosomal protein L18</fullName>
    </alternativeName>
</protein>
<keyword id="KW-1185">Reference proteome</keyword>
<keyword id="KW-0687">Ribonucleoprotein</keyword>
<keyword id="KW-0689">Ribosomal protein</keyword>
<keyword id="KW-0694">RNA-binding</keyword>
<keyword id="KW-0699">rRNA-binding</keyword>
<gene>
    <name evidence="1" type="primary">rplR</name>
    <name type="ordered locus">Gura_1082</name>
</gene>
<name>RL18_GEOUR</name>
<evidence type="ECO:0000255" key="1">
    <source>
        <dbReference type="HAMAP-Rule" id="MF_01337"/>
    </source>
</evidence>
<evidence type="ECO:0000305" key="2"/>
<comment type="function">
    <text evidence="1">This is one of the proteins that bind and probably mediate the attachment of the 5S RNA into the large ribosomal subunit, where it forms part of the central protuberance.</text>
</comment>
<comment type="subunit">
    <text evidence="1">Part of the 50S ribosomal subunit; part of the 5S rRNA/L5/L18/L25 subcomplex. Contacts the 5S and 23S rRNAs.</text>
</comment>
<comment type="similarity">
    <text evidence="1">Belongs to the universal ribosomal protein uL18 family.</text>
</comment>